<accession>A1CIJ6</accession>
<comment type="function">
    <text evidence="3">Acts as a catalytic component of the CCR4-NOT core complex, which in the nucleus seems to be a general transcription factor, and in the cytoplasm the major mRNA deadenylase involved in mRNA turnover (By similarity). Ccr4 has 3'-5' RNase activity with a strong preference for polyadenylated substrates and also low exonuclease activity towards single-stranded DNA (By similarity).</text>
</comment>
<comment type="catalytic activity">
    <reaction>
        <text>Exonucleolytic cleavage of poly(A) to 5'-AMP.</text>
        <dbReference type="EC" id="3.1.13.4"/>
    </reaction>
</comment>
<comment type="cofactor">
    <cofactor evidence="1">
        <name>Mg(2+)</name>
        <dbReference type="ChEBI" id="CHEBI:18420"/>
    </cofactor>
</comment>
<comment type="subcellular location">
    <subcellularLocation>
        <location evidence="1">Cytoplasm</location>
    </subcellularLocation>
    <subcellularLocation>
        <location evidence="1">Nucleus</location>
    </subcellularLocation>
</comment>
<comment type="similarity">
    <text evidence="5">Belongs to the CCR4/nocturin family.</text>
</comment>
<dbReference type="EC" id="3.1.13.4"/>
<dbReference type="EMBL" id="DS027054">
    <property type="protein sequence ID" value="EAW10701.1"/>
    <property type="molecule type" value="Genomic_DNA"/>
</dbReference>
<dbReference type="RefSeq" id="XP_001272127.1">
    <property type="nucleotide sequence ID" value="XM_001272126.1"/>
</dbReference>
<dbReference type="SMR" id="A1CIJ6"/>
<dbReference type="STRING" id="344612.A1CIJ6"/>
<dbReference type="EnsemblFungi" id="EAW10701">
    <property type="protein sequence ID" value="EAW10701"/>
    <property type="gene ID" value="ACLA_051730"/>
</dbReference>
<dbReference type="GeneID" id="4703673"/>
<dbReference type="KEGG" id="act:ACLA_051730"/>
<dbReference type="VEuPathDB" id="FungiDB:ACLA_051730"/>
<dbReference type="eggNOG" id="KOG0620">
    <property type="taxonomic scope" value="Eukaryota"/>
</dbReference>
<dbReference type="HOGENOM" id="CLU_016428_4_0_1"/>
<dbReference type="OMA" id="PHYYARA"/>
<dbReference type="OrthoDB" id="428734at2759"/>
<dbReference type="Proteomes" id="UP000006701">
    <property type="component" value="Unassembled WGS sequence"/>
</dbReference>
<dbReference type="GO" id="GO:0030015">
    <property type="term" value="C:CCR4-NOT core complex"/>
    <property type="evidence" value="ECO:0007669"/>
    <property type="project" value="EnsemblFungi"/>
</dbReference>
<dbReference type="GO" id="GO:0016593">
    <property type="term" value="C:Cdc73/Paf1 complex"/>
    <property type="evidence" value="ECO:0007669"/>
    <property type="project" value="EnsemblFungi"/>
</dbReference>
<dbReference type="GO" id="GO:0000932">
    <property type="term" value="C:P-body"/>
    <property type="evidence" value="ECO:0007669"/>
    <property type="project" value="EnsemblFungi"/>
</dbReference>
<dbReference type="GO" id="GO:0046872">
    <property type="term" value="F:metal ion binding"/>
    <property type="evidence" value="ECO:0007669"/>
    <property type="project" value="UniProtKB-KW"/>
</dbReference>
<dbReference type="GO" id="GO:0004535">
    <property type="term" value="F:poly(A)-specific ribonuclease activity"/>
    <property type="evidence" value="ECO:0007669"/>
    <property type="project" value="UniProtKB-EC"/>
</dbReference>
<dbReference type="GO" id="GO:0003723">
    <property type="term" value="F:RNA binding"/>
    <property type="evidence" value="ECO:0007669"/>
    <property type="project" value="UniProtKB-KW"/>
</dbReference>
<dbReference type="GO" id="GO:0006260">
    <property type="term" value="P:DNA replication"/>
    <property type="evidence" value="ECO:0007669"/>
    <property type="project" value="EnsemblFungi"/>
</dbReference>
<dbReference type="GO" id="GO:0000076">
    <property type="term" value="P:DNA replication checkpoint signaling"/>
    <property type="evidence" value="ECO:0007669"/>
    <property type="project" value="EnsemblFungi"/>
</dbReference>
<dbReference type="GO" id="GO:0000289">
    <property type="term" value="P:nuclear-transcribed mRNA poly(A) tail shortening"/>
    <property type="evidence" value="ECO:0007669"/>
    <property type="project" value="EnsemblFungi"/>
</dbReference>
<dbReference type="GO" id="GO:0032968">
    <property type="term" value="P:positive regulation of transcription elongation by RNA polymerase II"/>
    <property type="evidence" value="ECO:0007669"/>
    <property type="project" value="EnsemblFungi"/>
</dbReference>
<dbReference type="GO" id="GO:0006368">
    <property type="term" value="P:transcription elongation by RNA polymerase II"/>
    <property type="evidence" value="ECO:0007669"/>
    <property type="project" value="EnsemblFungi"/>
</dbReference>
<dbReference type="GO" id="GO:0007089">
    <property type="term" value="P:traversing start control point of mitotic cell cycle"/>
    <property type="evidence" value="ECO:0007669"/>
    <property type="project" value="EnsemblFungi"/>
</dbReference>
<dbReference type="CDD" id="cd09097">
    <property type="entry name" value="Deadenylase_CCR4"/>
    <property type="match status" value="1"/>
</dbReference>
<dbReference type="FunFam" id="3.60.10.10:FF:000037">
    <property type="entry name" value="Glucose-repressible alcohol dehydrogenase transcriptional effector"/>
    <property type="match status" value="1"/>
</dbReference>
<dbReference type="FunFam" id="3.80.10.10:FF:000447">
    <property type="entry name" value="Glucose-repressible alcohol dehydrogenase transcriptional effector"/>
    <property type="match status" value="1"/>
</dbReference>
<dbReference type="Gene3D" id="3.60.10.10">
    <property type="entry name" value="Endonuclease/exonuclease/phosphatase"/>
    <property type="match status" value="1"/>
</dbReference>
<dbReference type="Gene3D" id="3.80.10.10">
    <property type="entry name" value="Ribonuclease Inhibitor"/>
    <property type="match status" value="1"/>
</dbReference>
<dbReference type="InterPro" id="IPR050410">
    <property type="entry name" value="CCR4/nocturin_mRNA_transcr"/>
</dbReference>
<dbReference type="InterPro" id="IPR036691">
    <property type="entry name" value="Endo/exonu/phosph_ase_sf"/>
</dbReference>
<dbReference type="InterPro" id="IPR005135">
    <property type="entry name" value="Endo/exonuclease/phosphatase"/>
</dbReference>
<dbReference type="InterPro" id="IPR001611">
    <property type="entry name" value="Leu-rich_rpt"/>
</dbReference>
<dbReference type="InterPro" id="IPR003591">
    <property type="entry name" value="Leu-rich_rpt_typical-subtyp"/>
</dbReference>
<dbReference type="InterPro" id="IPR032675">
    <property type="entry name" value="LRR_dom_sf"/>
</dbReference>
<dbReference type="InterPro" id="IPR055414">
    <property type="entry name" value="LRR_R13L4/SHOC2-like"/>
</dbReference>
<dbReference type="PANTHER" id="PTHR12121">
    <property type="entry name" value="CARBON CATABOLITE REPRESSOR PROTEIN 4"/>
    <property type="match status" value="1"/>
</dbReference>
<dbReference type="PANTHER" id="PTHR12121:SF100">
    <property type="entry name" value="POLY(A)-SPECIFIC RIBONUCLEASE"/>
    <property type="match status" value="1"/>
</dbReference>
<dbReference type="Pfam" id="PF03372">
    <property type="entry name" value="Exo_endo_phos"/>
    <property type="match status" value="1"/>
</dbReference>
<dbReference type="Pfam" id="PF23598">
    <property type="entry name" value="LRR_14"/>
    <property type="match status" value="1"/>
</dbReference>
<dbReference type="SMART" id="SM00369">
    <property type="entry name" value="LRR_TYP"/>
    <property type="match status" value="3"/>
</dbReference>
<dbReference type="SUPFAM" id="SSF56219">
    <property type="entry name" value="DNase I-like"/>
    <property type="match status" value="1"/>
</dbReference>
<dbReference type="SUPFAM" id="SSF52058">
    <property type="entry name" value="L domain-like"/>
    <property type="match status" value="1"/>
</dbReference>
<dbReference type="PROSITE" id="PS51450">
    <property type="entry name" value="LRR"/>
    <property type="match status" value="3"/>
</dbReference>
<evidence type="ECO:0000250" key="1"/>
<evidence type="ECO:0000250" key="2">
    <source>
        <dbReference type="UniProtKB" id="O95551"/>
    </source>
</evidence>
<evidence type="ECO:0000250" key="3">
    <source>
        <dbReference type="UniProtKB" id="P31384"/>
    </source>
</evidence>
<evidence type="ECO:0000256" key="4">
    <source>
        <dbReference type="SAM" id="MobiDB-lite"/>
    </source>
</evidence>
<evidence type="ECO:0000305" key="5"/>
<keyword id="KW-0010">Activator</keyword>
<keyword id="KW-0963">Cytoplasm</keyword>
<keyword id="KW-0269">Exonuclease</keyword>
<keyword id="KW-0378">Hydrolase</keyword>
<keyword id="KW-0433">Leucine-rich repeat</keyword>
<keyword id="KW-0460">Magnesium</keyword>
<keyword id="KW-0479">Metal-binding</keyword>
<keyword id="KW-0540">Nuclease</keyword>
<keyword id="KW-0539">Nucleus</keyword>
<keyword id="KW-1185">Reference proteome</keyword>
<keyword id="KW-0677">Repeat</keyword>
<keyword id="KW-0678">Repressor</keyword>
<keyword id="KW-0694">RNA-binding</keyword>
<keyword id="KW-0804">Transcription</keyword>
<keyword id="KW-0805">Transcription regulation</keyword>
<reference key="1">
    <citation type="journal article" date="2008" name="PLoS Genet.">
        <title>Genomic islands in the pathogenic filamentous fungus Aspergillus fumigatus.</title>
        <authorList>
            <person name="Fedorova N.D."/>
            <person name="Khaldi N."/>
            <person name="Joardar V.S."/>
            <person name="Maiti R."/>
            <person name="Amedeo P."/>
            <person name="Anderson M.J."/>
            <person name="Crabtree J."/>
            <person name="Silva J.C."/>
            <person name="Badger J.H."/>
            <person name="Albarraq A."/>
            <person name="Angiuoli S."/>
            <person name="Bussey H."/>
            <person name="Bowyer P."/>
            <person name="Cotty P.J."/>
            <person name="Dyer P.S."/>
            <person name="Egan A."/>
            <person name="Galens K."/>
            <person name="Fraser-Liggett C.M."/>
            <person name="Haas B.J."/>
            <person name="Inman J.M."/>
            <person name="Kent R."/>
            <person name="Lemieux S."/>
            <person name="Malavazi I."/>
            <person name="Orvis J."/>
            <person name="Roemer T."/>
            <person name="Ronning C.M."/>
            <person name="Sundaram J.P."/>
            <person name="Sutton G."/>
            <person name="Turner G."/>
            <person name="Venter J.C."/>
            <person name="White O.R."/>
            <person name="Whitty B.R."/>
            <person name="Youngman P."/>
            <person name="Wolfe K.H."/>
            <person name="Goldman G.H."/>
            <person name="Wortman J.R."/>
            <person name="Jiang B."/>
            <person name="Denning D.W."/>
            <person name="Nierman W.C."/>
        </authorList>
    </citation>
    <scope>NUCLEOTIDE SEQUENCE [LARGE SCALE GENOMIC DNA]</scope>
    <source>
        <strain>ATCC 1007 / CBS 513.65 / DSM 816 / NCTC 3887 / NRRL 1 / QM 1276 / 107</strain>
    </source>
</reference>
<organism>
    <name type="scientific">Aspergillus clavatus (strain ATCC 1007 / CBS 513.65 / DSM 816 / NCTC 3887 / NRRL 1 / QM 1276 / 107)</name>
    <dbReference type="NCBI Taxonomy" id="344612"/>
    <lineage>
        <taxon>Eukaryota</taxon>
        <taxon>Fungi</taxon>
        <taxon>Dikarya</taxon>
        <taxon>Ascomycota</taxon>
        <taxon>Pezizomycotina</taxon>
        <taxon>Eurotiomycetes</taxon>
        <taxon>Eurotiomycetidae</taxon>
        <taxon>Eurotiales</taxon>
        <taxon>Aspergillaceae</taxon>
        <taxon>Aspergillus</taxon>
        <taxon>Aspergillus subgen. Fumigati</taxon>
    </lineage>
</organism>
<feature type="chain" id="PRO_0000290602" description="CCR4-Not complex 3'-5'-exoribonuclease subunit Ccr4">
    <location>
        <begin position="1"/>
        <end position="667"/>
    </location>
</feature>
<feature type="repeat" description="LRR 1">
    <location>
        <begin position="169"/>
        <end position="190"/>
    </location>
</feature>
<feature type="repeat" description="LRR 2">
    <location>
        <begin position="192"/>
        <end position="213"/>
    </location>
</feature>
<feature type="repeat" description="LRR 3">
    <location>
        <begin position="215"/>
        <end position="236"/>
    </location>
</feature>
<feature type="repeat" description="LRR 4">
    <location>
        <begin position="238"/>
        <end position="259"/>
    </location>
</feature>
<feature type="region of interest" description="Disordered" evidence="4">
    <location>
        <begin position="18"/>
        <end position="40"/>
    </location>
</feature>
<feature type="region of interest" description="Disordered" evidence="4">
    <location>
        <begin position="55"/>
        <end position="140"/>
    </location>
</feature>
<feature type="region of interest" description="Disordered" evidence="4">
    <location>
        <begin position="502"/>
        <end position="522"/>
    </location>
</feature>
<feature type="compositionally biased region" description="Basic residues" evidence="4">
    <location>
        <begin position="22"/>
        <end position="38"/>
    </location>
</feature>
<feature type="compositionally biased region" description="Polar residues" evidence="4">
    <location>
        <begin position="55"/>
        <end position="71"/>
    </location>
</feature>
<feature type="compositionally biased region" description="Polar residues" evidence="4">
    <location>
        <begin position="84"/>
        <end position="101"/>
    </location>
</feature>
<feature type="compositionally biased region" description="Polar residues" evidence="4">
    <location>
        <begin position="119"/>
        <end position="133"/>
    </location>
</feature>
<feature type="binding site" evidence="2">
    <location>
        <position position="349"/>
    </location>
    <ligand>
        <name>Mg(2+)</name>
        <dbReference type="ChEBI" id="CHEBI:18420"/>
    </ligand>
</feature>
<sequence>MNGGQAHQRFGMQIPKFQSQNHHPHHTQQPHHHTHHNQASHNINHQHQFSSGALASATPHFTPSHMQNGAHTNVDEDIDDSMNEHWQQQLQLAAESRQANSPHYHARSVAQQAKGIQIAPSQPDTQEQGSDGQNGVGKTKAVSRQGWHALDFGGQGLRALSTSLFNYVFLEKLYLNHNKLKSLPPTIGHLRKLSHLDLSGNDLTELPDEIGMLTNLRKLYLFDNNIRTLPYEMGYLYRLDTLGIEGNPLNDVLKSHIMKEGTKALIKYLKEEMPVHLPPPDRDWVVLDETASASTEKITVLSYNTLCDSSATQSHYGYAPARVLSWEFRRELILSELRSHGSDIVCLQEIDQGSYNEYFREQLAYNDYKGVYWPRGRAMGMQEEDAKGVDGCATFFKGSKFILLDKQLINFGQTAVRRPDAKGQDDIYNRLWQKDHIAVVVFLENRQTGSRFIVVNAHLYWDPAFKDVKLIQTAILMEEITKLSETYAKWPACTDKAAFRFSKEEGQTEAPPPEEPAPSVQYSSGDQIPLLMCGDLNSSPGSAAYNLIAHGRLDEEHPDLEKRLYGNLSKVGMTHPFKLKSAYGSIGELPFTNYTPDFKDILDYIWYSSNSLHVSALLGEVDKDYLQKVPGFPNYHFPSDHIALFAEFTVKGKKGKVVEADFGPQRN</sequence>
<name>CCR4_ASPCL</name>
<protein>
    <recommendedName>
        <fullName evidence="5">CCR4-Not complex 3'-5'-exoribonuclease subunit Ccr4</fullName>
        <ecNumber>3.1.13.4</ecNumber>
    </recommendedName>
    <alternativeName>
        <fullName>Carbon catabolite repressor protein 4</fullName>
    </alternativeName>
    <alternativeName>
        <fullName>Cytoplasmic deadenylase</fullName>
    </alternativeName>
    <alternativeName>
        <fullName>Glucose-repressible alcohol dehydrogenase transcriptional effector</fullName>
    </alternativeName>
</protein>
<gene>
    <name type="primary">ccr4</name>
    <name type="ORF">ACLA_051730</name>
</gene>
<proteinExistence type="inferred from homology"/>